<protein>
    <recommendedName>
        <fullName evidence="2">Dynein regulatory complex subunit 4</fullName>
    </recommendedName>
    <alternativeName>
        <fullName>Growth arrest-specific protein 8</fullName>
        <shortName>GAS-8</shortName>
    </alternativeName>
</protein>
<sequence length="475" mass="56662">MPPKRKSSPKGKTPTVVDGLSTEEMSKEQLEEHIMRLREELDREREERNYFQLERDKIHTFWEITRRHLEENKCELRNRERELEEVEERHQVEIKVYKQKVKHLLYEQQNMLSELKAESIISTKLLQDEHADLEKEQWKDMRSLKLELKQQELSSENVLKRIHLKHDEETTDLRNDFARQVQEIGSKYEKRMQKLRQEEELRRKTEIHEIEERKNTHINMLMKNHEKAFRDIRNYFSDIVYKNLDLITSLKEELKEMKKNEEKRNKEMAEVLEQNKELKESSQKAKEQVAELQKQLANYEKDKSILTRSRARLKMSDREMKELKWELEVLEQRFSKVQLERDELYMKFTKAILEVQQKSGFKNLLLECKLNTLNDTLEKKEAQLSEVLSASNLDPTTLSVVTHKLEEVLESKNHTIKDLQYEVARVCKAHNDLLKTSEAKLRAFGIPVEELCFEPLKSNGQSVGQGPAMFVSSSN</sequence>
<organism>
    <name type="scientific">Danio rerio</name>
    <name type="common">Zebrafish</name>
    <name type="synonym">Brachydanio rerio</name>
    <dbReference type="NCBI Taxonomy" id="7955"/>
    <lineage>
        <taxon>Eukaryota</taxon>
        <taxon>Metazoa</taxon>
        <taxon>Chordata</taxon>
        <taxon>Craniata</taxon>
        <taxon>Vertebrata</taxon>
        <taxon>Euteleostomi</taxon>
        <taxon>Actinopterygii</taxon>
        <taxon>Neopterygii</taxon>
        <taxon>Teleostei</taxon>
        <taxon>Ostariophysi</taxon>
        <taxon>Cypriniformes</taxon>
        <taxon>Danionidae</taxon>
        <taxon>Danioninae</taxon>
        <taxon>Danio</taxon>
    </lineage>
</organism>
<accession>F1QNW4</accession>
<accession>Q6PFL7</accession>
<keyword id="KW-0966">Cell projection</keyword>
<keyword id="KW-0969">Cilium</keyword>
<keyword id="KW-0175">Coiled coil</keyword>
<keyword id="KW-0963">Cytoplasm</keyword>
<keyword id="KW-0206">Cytoskeleton</keyword>
<keyword id="KW-0282">Flagellum</keyword>
<keyword id="KW-0333">Golgi apparatus</keyword>
<keyword id="KW-0493">Microtubule</keyword>
<keyword id="KW-1185">Reference proteome</keyword>
<feature type="chain" id="PRO_0000444014" description="Dynein regulatory complex subunit 4">
    <location>
        <begin position="1"/>
        <end position="475"/>
    </location>
</feature>
<feature type="region of interest" description="Regulates microtubule-binding" evidence="2">
    <location>
        <begin position="1"/>
        <end position="113"/>
    </location>
</feature>
<feature type="region of interest" description="Disordered" evidence="5">
    <location>
        <begin position="1"/>
        <end position="22"/>
    </location>
</feature>
<feature type="region of interest" description="Microtubule-binding" evidence="2">
    <location>
        <begin position="114"/>
        <end position="257"/>
    </location>
</feature>
<feature type="coiled-coil region" evidence="4">
    <location>
        <begin position="20"/>
        <end position="104"/>
    </location>
</feature>
<feature type="coiled-coil region" evidence="4">
    <location>
        <begin position="142"/>
        <end position="200"/>
    </location>
</feature>
<feature type="coiled-coil region" evidence="4">
    <location>
        <begin position="242"/>
        <end position="426"/>
    </location>
</feature>
<feature type="sequence conflict" description="In Ref. 2; AAH57501." evidence="8" ref="2">
    <original>F</original>
    <variation>Y</variation>
    <location>
        <position position="229"/>
    </location>
</feature>
<name>DRC4_DANRE</name>
<evidence type="ECO:0000250" key="1">
    <source>
        <dbReference type="UniProtKB" id="O95995"/>
    </source>
</evidence>
<evidence type="ECO:0000250" key="2">
    <source>
        <dbReference type="UniProtKB" id="Q60779"/>
    </source>
</evidence>
<evidence type="ECO:0000250" key="3">
    <source>
        <dbReference type="UniProtKB" id="Q7XJ96"/>
    </source>
</evidence>
<evidence type="ECO:0000255" key="4"/>
<evidence type="ECO:0000256" key="5">
    <source>
        <dbReference type="SAM" id="MobiDB-lite"/>
    </source>
</evidence>
<evidence type="ECO:0000269" key="6">
    <source>
    </source>
</evidence>
<evidence type="ECO:0000269" key="7">
    <source>
    </source>
</evidence>
<evidence type="ECO:0000305" key="8"/>
<dbReference type="EMBL" id="CU570687">
    <property type="status" value="NOT_ANNOTATED_CDS"/>
    <property type="molecule type" value="Genomic_DNA"/>
</dbReference>
<dbReference type="EMBL" id="CU656039">
    <property type="status" value="NOT_ANNOTATED_CDS"/>
    <property type="molecule type" value="Genomic_DNA"/>
</dbReference>
<dbReference type="EMBL" id="BC057501">
    <property type="protein sequence ID" value="AAH57501.1"/>
    <property type="molecule type" value="mRNA"/>
</dbReference>
<dbReference type="RefSeq" id="NP_955928.1">
    <property type="nucleotide sequence ID" value="NM_199634.1"/>
</dbReference>
<dbReference type="SMR" id="F1QNW4"/>
<dbReference type="FunCoup" id="F1QNW4">
    <property type="interactions" value="512"/>
</dbReference>
<dbReference type="STRING" id="7955.ENSDARP00000135402"/>
<dbReference type="PaxDb" id="7955-ENSDARP00000059906"/>
<dbReference type="Ensembl" id="ENSDART00000170982">
    <property type="protein sequence ID" value="ENSDARP00000135402"/>
    <property type="gene ID" value="ENSDARG00000101431"/>
</dbReference>
<dbReference type="GeneID" id="323260"/>
<dbReference type="KEGG" id="dre:323260"/>
<dbReference type="AGR" id="ZFIN:ZDB-GENE-030131-1980"/>
<dbReference type="CTD" id="2622"/>
<dbReference type="ZFIN" id="ZDB-GENE-030131-1980">
    <property type="gene designation" value="gas8"/>
</dbReference>
<dbReference type="eggNOG" id="ENOG502QQDA">
    <property type="taxonomic scope" value="Eukaryota"/>
</dbReference>
<dbReference type="HOGENOM" id="CLU_045343_0_0_1"/>
<dbReference type="InParanoid" id="F1QNW4"/>
<dbReference type="OMA" id="MKHLQYE"/>
<dbReference type="OrthoDB" id="767661at2759"/>
<dbReference type="PhylomeDB" id="F1QNW4"/>
<dbReference type="TreeFam" id="TF323819"/>
<dbReference type="PRO" id="PR:F1QNW4"/>
<dbReference type="Proteomes" id="UP000000437">
    <property type="component" value="Chromosome 18"/>
</dbReference>
<dbReference type="Bgee" id="ENSDARG00000101431">
    <property type="expression patterns" value="Expressed in testis and 29 other cell types or tissues"/>
</dbReference>
<dbReference type="GO" id="GO:0036064">
    <property type="term" value="C:ciliary basal body"/>
    <property type="evidence" value="ECO:0000250"/>
    <property type="project" value="UniProtKB"/>
</dbReference>
<dbReference type="GO" id="GO:0005737">
    <property type="term" value="C:cytoplasm"/>
    <property type="evidence" value="ECO:0000250"/>
    <property type="project" value="UniProtKB"/>
</dbReference>
<dbReference type="GO" id="GO:0005576">
    <property type="term" value="C:extracellular region"/>
    <property type="evidence" value="ECO:0007669"/>
    <property type="project" value="GOC"/>
</dbReference>
<dbReference type="GO" id="GO:0005794">
    <property type="term" value="C:Golgi apparatus"/>
    <property type="evidence" value="ECO:0000318"/>
    <property type="project" value="GO_Central"/>
</dbReference>
<dbReference type="GO" id="GO:0005874">
    <property type="term" value="C:microtubule"/>
    <property type="evidence" value="ECO:0000318"/>
    <property type="project" value="GO_Central"/>
</dbReference>
<dbReference type="GO" id="GO:0031514">
    <property type="term" value="C:motile cilium"/>
    <property type="evidence" value="ECO:0007669"/>
    <property type="project" value="UniProtKB-SubCell"/>
</dbReference>
<dbReference type="GO" id="GO:0008017">
    <property type="term" value="F:microtubule binding"/>
    <property type="evidence" value="ECO:0007669"/>
    <property type="project" value="InterPro"/>
</dbReference>
<dbReference type="GO" id="GO:0031267">
    <property type="term" value="F:small GTPase binding"/>
    <property type="evidence" value="ECO:0007669"/>
    <property type="project" value="InterPro"/>
</dbReference>
<dbReference type="GO" id="GO:0035082">
    <property type="term" value="P:axoneme assembly"/>
    <property type="evidence" value="ECO:0000250"/>
    <property type="project" value="UniProtKB"/>
</dbReference>
<dbReference type="GO" id="GO:0003355">
    <property type="term" value="P:cilium movement involved in otolith formation"/>
    <property type="evidence" value="ECO:0000315"/>
    <property type="project" value="UniProtKB"/>
</dbReference>
<dbReference type="GO" id="GO:0030317">
    <property type="term" value="P:flagellated sperm motility"/>
    <property type="evidence" value="ECO:0000318"/>
    <property type="project" value="GO_Central"/>
</dbReference>
<dbReference type="GO" id="GO:0055001">
    <property type="term" value="P:muscle cell development"/>
    <property type="evidence" value="ECO:0000315"/>
    <property type="project" value="ZFIN"/>
</dbReference>
<dbReference type="GO" id="GO:0035889">
    <property type="term" value="P:otolith tethering"/>
    <property type="evidence" value="ECO:0000315"/>
    <property type="project" value="UniProtKB"/>
</dbReference>
<dbReference type="GO" id="GO:1903566">
    <property type="term" value="P:positive regulation of protein localization to cilium"/>
    <property type="evidence" value="ECO:0000250"/>
    <property type="project" value="UniProtKB"/>
</dbReference>
<dbReference type="GO" id="GO:0045880">
    <property type="term" value="P:positive regulation of smoothened signaling pathway"/>
    <property type="evidence" value="ECO:0000315"/>
    <property type="project" value="ZFIN"/>
</dbReference>
<dbReference type="InterPro" id="IPR039308">
    <property type="entry name" value="GAS8"/>
</dbReference>
<dbReference type="InterPro" id="IPR025593">
    <property type="entry name" value="GAS8_dom"/>
</dbReference>
<dbReference type="PANTHER" id="PTHR31543">
    <property type="entry name" value="DYNEIN REGULATORY COMPLEX SUBUNIT 4"/>
    <property type="match status" value="1"/>
</dbReference>
<dbReference type="PANTHER" id="PTHR31543:SF0">
    <property type="entry name" value="DYNEIN REGULATORY COMPLEX SUBUNIT 4"/>
    <property type="match status" value="1"/>
</dbReference>
<dbReference type="Pfam" id="PF13851">
    <property type="entry name" value="GAS"/>
    <property type="match status" value="1"/>
</dbReference>
<gene>
    <name type="primary">gas8</name>
    <name evidence="2" type="synonym">drc4</name>
</gene>
<reference key="1">
    <citation type="journal article" date="2013" name="Nature">
        <title>The zebrafish reference genome sequence and its relationship to the human genome.</title>
        <authorList>
            <person name="Howe K."/>
            <person name="Clark M.D."/>
            <person name="Torroja C.F."/>
            <person name="Torrance J."/>
            <person name="Berthelot C."/>
            <person name="Muffato M."/>
            <person name="Collins J.E."/>
            <person name="Humphray S."/>
            <person name="McLaren K."/>
            <person name="Matthews L."/>
            <person name="McLaren S."/>
            <person name="Sealy I."/>
            <person name="Caccamo M."/>
            <person name="Churcher C."/>
            <person name="Scott C."/>
            <person name="Barrett J.C."/>
            <person name="Koch R."/>
            <person name="Rauch G.J."/>
            <person name="White S."/>
            <person name="Chow W."/>
            <person name="Kilian B."/>
            <person name="Quintais L.T."/>
            <person name="Guerra-Assuncao J.A."/>
            <person name="Zhou Y."/>
            <person name="Gu Y."/>
            <person name="Yen J."/>
            <person name="Vogel J.H."/>
            <person name="Eyre T."/>
            <person name="Redmond S."/>
            <person name="Banerjee R."/>
            <person name="Chi J."/>
            <person name="Fu B."/>
            <person name="Langley E."/>
            <person name="Maguire S.F."/>
            <person name="Laird G.K."/>
            <person name="Lloyd D."/>
            <person name="Kenyon E."/>
            <person name="Donaldson S."/>
            <person name="Sehra H."/>
            <person name="Almeida-King J."/>
            <person name="Loveland J."/>
            <person name="Trevanion S."/>
            <person name="Jones M."/>
            <person name="Quail M."/>
            <person name="Willey D."/>
            <person name="Hunt A."/>
            <person name="Burton J."/>
            <person name="Sims S."/>
            <person name="McLay K."/>
            <person name="Plumb B."/>
            <person name="Davis J."/>
            <person name="Clee C."/>
            <person name="Oliver K."/>
            <person name="Clark R."/>
            <person name="Riddle C."/>
            <person name="Elliot D."/>
            <person name="Threadgold G."/>
            <person name="Harden G."/>
            <person name="Ware D."/>
            <person name="Begum S."/>
            <person name="Mortimore B."/>
            <person name="Kerry G."/>
            <person name="Heath P."/>
            <person name="Phillimore B."/>
            <person name="Tracey A."/>
            <person name="Corby N."/>
            <person name="Dunn M."/>
            <person name="Johnson C."/>
            <person name="Wood J."/>
            <person name="Clark S."/>
            <person name="Pelan S."/>
            <person name="Griffiths G."/>
            <person name="Smith M."/>
            <person name="Glithero R."/>
            <person name="Howden P."/>
            <person name="Barker N."/>
            <person name="Lloyd C."/>
            <person name="Stevens C."/>
            <person name="Harley J."/>
            <person name="Holt K."/>
            <person name="Panagiotidis G."/>
            <person name="Lovell J."/>
            <person name="Beasley H."/>
            <person name="Henderson C."/>
            <person name="Gordon D."/>
            <person name="Auger K."/>
            <person name="Wright D."/>
            <person name="Collins J."/>
            <person name="Raisen C."/>
            <person name="Dyer L."/>
            <person name="Leung K."/>
            <person name="Robertson L."/>
            <person name="Ambridge K."/>
            <person name="Leongamornlert D."/>
            <person name="McGuire S."/>
            <person name="Gilderthorp R."/>
            <person name="Griffiths C."/>
            <person name="Manthravadi D."/>
            <person name="Nichol S."/>
            <person name="Barker G."/>
            <person name="Whitehead S."/>
            <person name="Kay M."/>
            <person name="Brown J."/>
            <person name="Murnane C."/>
            <person name="Gray E."/>
            <person name="Humphries M."/>
            <person name="Sycamore N."/>
            <person name="Barker D."/>
            <person name="Saunders D."/>
            <person name="Wallis J."/>
            <person name="Babbage A."/>
            <person name="Hammond S."/>
            <person name="Mashreghi-Mohammadi M."/>
            <person name="Barr L."/>
            <person name="Martin S."/>
            <person name="Wray P."/>
            <person name="Ellington A."/>
            <person name="Matthews N."/>
            <person name="Ellwood M."/>
            <person name="Woodmansey R."/>
            <person name="Clark G."/>
            <person name="Cooper J."/>
            <person name="Tromans A."/>
            <person name="Grafham D."/>
            <person name="Skuce C."/>
            <person name="Pandian R."/>
            <person name="Andrews R."/>
            <person name="Harrison E."/>
            <person name="Kimberley A."/>
            <person name="Garnett J."/>
            <person name="Fosker N."/>
            <person name="Hall R."/>
            <person name="Garner P."/>
            <person name="Kelly D."/>
            <person name="Bird C."/>
            <person name="Palmer S."/>
            <person name="Gehring I."/>
            <person name="Berger A."/>
            <person name="Dooley C.M."/>
            <person name="Ersan-Urun Z."/>
            <person name="Eser C."/>
            <person name="Geiger H."/>
            <person name="Geisler M."/>
            <person name="Karotki L."/>
            <person name="Kirn A."/>
            <person name="Konantz J."/>
            <person name="Konantz M."/>
            <person name="Oberlander M."/>
            <person name="Rudolph-Geiger S."/>
            <person name="Teucke M."/>
            <person name="Lanz C."/>
            <person name="Raddatz G."/>
            <person name="Osoegawa K."/>
            <person name="Zhu B."/>
            <person name="Rapp A."/>
            <person name="Widaa S."/>
            <person name="Langford C."/>
            <person name="Yang F."/>
            <person name="Schuster S.C."/>
            <person name="Carter N.P."/>
            <person name="Harrow J."/>
            <person name="Ning Z."/>
            <person name="Herrero J."/>
            <person name="Searle S.M."/>
            <person name="Enright A."/>
            <person name="Geisler R."/>
            <person name="Plasterk R.H."/>
            <person name="Lee C."/>
            <person name="Westerfield M."/>
            <person name="de Jong P.J."/>
            <person name="Zon L.I."/>
            <person name="Postlethwait J.H."/>
            <person name="Nusslein-Volhard C."/>
            <person name="Hubbard T.J."/>
            <person name="Roest Crollius H."/>
            <person name="Rogers J."/>
            <person name="Stemple D.L."/>
        </authorList>
    </citation>
    <scope>NUCLEOTIDE SEQUENCE [LARGE SCALE GENOMIC DNA]</scope>
    <source>
        <strain>Tuebingen</strain>
    </source>
</reference>
<reference key="2">
    <citation type="submission" date="2003-09" db="EMBL/GenBank/DDBJ databases">
        <authorList>
            <consortium name="NIH - Zebrafish Gene Collection (ZGC) project"/>
        </authorList>
    </citation>
    <scope>NUCLEOTIDE SEQUENCE [LARGE SCALE MRNA]</scope>
</reference>
<reference key="3">
    <citation type="journal article" date="2009" name="Nature">
        <title>The dynein regulatory complex is required for ciliary motility and otolith biogenesis in the inner ear.</title>
        <authorList>
            <person name="Colantonio J.R."/>
            <person name="Vermot J."/>
            <person name="Wu D."/>
            <person name="Langenbacher A.D."/>
            <person name="Fraser S."/>
            <person name="Chen J.N."/>
            <person name="Hill K.L."/>
        </authorList>
    </citation>
    <scope>FUNCTION</scope>
    <scope>DISRUPTION PHENOTYPE</scope>
</reference>
<reference key="4">
    <citation type="journal article" date="2011" name="J. Biol. Chem.">
        <title>Growth arrest specific 8 (Gas8) and G protein-coupled receptor kinase 2 (GRK2) cooperate in the control of Smoothened signaling.</title>
        <authorList>
            <person name="Evron T."/>
            <person name="Philipp M."/>
            <person name="Lu J."/>
            <person name="Meloni A.R."/>
            <person name="Burkhalter M."/>
            <person name="Chen W."/>
            <person name="Caron M.G."/>
        </authorList>
    </citation>
    <scope>FUNCTION</scope>
    <scope>DISRUPTION PHENOTYPE</scope>
</reference>
<comment type="function">
    <text evidence="3 6 7">Component of the nexin-dynein regulatory complex (N-DRC), a key regulator of ciliary/flagellar motility which maintains the alignment and integrity of the distal axoneme and regulates microtubule sliding in motile axonemes. Plays an important role in the assembly of the N-DRC linker (By similarity). Plays dual roles at both the primary (or non-motile) cilia to regulate hedgehog signaling and in motile cilia to coordinate cilia movement. Required for proper slow muscle development and positively regulates ciliary smoothened (SMO)-dependent Hedgehog (Hh) signaling pathway (PubMed:21659505). Required for tether cilia motility which is essential for normal otolith formation and localization in the developing inner ear (PubMed:19043402).</text>
</comment>
<comment type="subunit">
    <text evidence="3">Component of the nexin-dynein regulatory complex (N-DRC). Interacts with microtubules.</text>
</comment>
<comment type="subcellular location">
    <subcellularLocation>
        <location evidence="2">Cytoplasm</location>
    </subcellularLocation>
    <subcellularLocation>
        <location evidence="1">Cytoplasm</location>
        <location evidence="1">Cytoskeleton</location>
    </subcellularLocation>
    <subcellularLocation>
        <location evidence="2">Cell projection</location>
        <location evidence="2">Cilium</location>
        <location evidence="2">Flagellum</location>
    </subcellularLocation>
    <subcellularLocation>
        <location evidence="1">Cytoplasm</location>
        <location evidence="1">Cytoskeleton</location>
        <location evidence="1">Cilium axoneme</location>
    </subcellularLocation>
    <subcellularLocation>
        <location evidence="2">Cytoplasm</location>
        <location evidence="2">Cytoskeleton</location>
        <location evidence="2">Cilium basal body</location>
    </subcellularLocation>
    <subcellularLocation>
        <location evidence="1">Golgi apparatus</location>
    </subcellularLocation>
    <subcellularLocation>
        <location evidence="1">Cell projection</location>
        <location evidence="1">Cilium</location>
    </subcellularLocation>
    <subcellularLocation>
        <location evidence="3">Cytoplasm</location>
        <location evidence="3">Cytoskeleton</location>
        <location evidence="3">Flagellum axoneme</location>
    </subcellularLocation>
</comment>
<comment type="developmental stage">
    <text evidence="6">Maternal transcripts are ubiquitous throughout the embryo during early development. By the 12-somite stage, expression becomes concentrated in the developing ears and this persists through the 18- to 20-somite stage. Transcripts are also present in the brain, neural tube and pronephric ducts.</text>
</comment>
<comment type="disruption phenotype">
    <text evidence="6 7">Morpholino knockdown results in attenuated Hedgehog (Hh) transcriptional responses and impaired early muscle development (PubMed:21659505). Morphants exhibit developmental abnormalities, abnormal ear development and defective cilia motility (PubMed:19043402).</text>
</comment>
<comment type="similarity">
    <text evidence="8">Belongs to the DRC4 family.</text>
</comment>
<proteinExistence type="evidence at transcript level"/>